<dbReference type="EC" id="2.7.8.7" evidence="1"/>
<dbReference type="EMBL" id="BA000021">
    <property type="protein sequence ID" value="BAC24344.1"/>
    <property type="molecule type" value="Genomic_DNA"/>
</dbReference>
<dbReference type="SMR" id="Q8D303"/>
<dbReference type="STRING" id="36870.gene:10368686"/>
<dbReference type="KEGG" id="wbr:acpS"/>
<dbReference type="eggNOG" id="COG0736">
    <property type="taxonomic scope" value="Bacteria"/>
</dbReference>
<dbReference type="HOGENOM" id="CLU_089696_3_1_6"/>
<dbReference type="OrthoDB" id="517356at2"/>
<dbReference type="Proteomes" id="UP000000562">
    <property type="component" value="Chromosome"/>
</dbReference>
<dbReference type="GO" id="GO:0005737">
    <property type="term" value="C:cytoplasm"/>
    <property type="evidence" value="ECO:0007669"/>
    <property type="project" value="UniProtKB-SubCell"/>
</dbReference>
<dbReference type="GO" id="GO:0008897">
    <property type="term" value="F:holo-[acyl-carrier-protein] synthase activity"/>
    <property type="evidence" value="ECO:0007669"/>
    <property type="project" value="UniProtKB-UniRule"/>
</dbReference>
<dbReference type="GO" id="GO:0000287">
    <property type="term" value="F:magnesium ion binding"/>
    <property type="evidence" value="ECO:0007669"/>
    <property type="project" value="UniProtKB-UniRule"/>
</dbReference>
<dbReference type="GO" id="GO:0006633">
    <property type="term" value="P:fatty acid biosynthetic process"/>
    <property type="evidence" value="ECO:0007669"/>
    <property type="project" value="UniProtKB-UniRule"/>
</dbReference>
<dbReference type="FunFam" id="3.90.470.20:FF:000001">
    <property type="entry name" value="Holo-[acyl-carrier-protein] synthase"/>
    <property type="match status" value="1"/>
</dbReference>
<dbReference type="Gene3D" id="3.90.470.20">
    <property type="entry name" value="4'-phosphopantetheinyl transferase domain"/>
    <property type="match status" value="1"/>
</dbReference>
<dbReference type="HAMAP" id="MF_00101">
    <property type="entry name" value="AcpS"/>
    <property type="match status" value="1"/>
</dbReference>
<dbReference type="InterPro" id="IPR008278">
    <property type="entry name" value="4-PPantetheinyl_Trfase_dom"/>
</dbReference>
<dbReference type="InterPro" id="IPR037143">
    <property type="entry name" value="4-PPantetheinyl_Trfase_dom_sf"/>
</dbReference>
<dbReference type="InterPro" id="IPR002582">
    <property type="entry name" value="ACPS"/>
</dbReference>
<dbReference type="InterPro" id="IPR004568">
    <property type="entry name" value="Ppantetheine-prot_Trfase_dom"/>
</dbReference>
<dbReference type="NCBIfam" id="TIGR00516">
    <property type="entry name" value="acpS"/>
    <property type="match status" value="1"/>
</dbReference>
<dbReference type="NCBIfam" id="TIGR00556">
    <property type="entry name" value="pantethn_trn"/>
    <property type="match status" value="1"/>
</dbReference>
<dbReference type="Pfam" id="PF01648">
    <property type="entry name" value="ACPS"/>
    <property type="match status" value="1"/>
</dbReference>
<dbReference type="SUPFAM" id="SSF56214">
    <property type="entry name" value="4'-phosphopantetheinyl transferase"/>
    <property type="match status" value="1"/>
</dbReference>
<feature type="chain" id="PRO_0000175730" description="Holo-[acyl-carrier-protein] synthase">
    <location>
        <begin position="1"/>
        <end position="139"/>
    </location>
</feature>
<feature type="binding site" evidence="1">
    <location>
        <position position="9"/>
    </location>
    <ligand>
        <name>Mg(2+)</name>
        <dbReference type="ChEBI" id="CHEBI:18420"/>
    </ligand>
</feature>
<feature type="binding site" evidence="1">
    <location>
        <position position="63"/>
    </location>
    <ligand>
        <name>Mg(2+)</name>
        <dbReference type="ChEBI" id="CHEBI:18420"/>
    </ligand>
</feature>
<comment type="function">
    <text evidence="1">Transfers the 4'-phosphopantetheine moiety from coenzyme A to a Ser of acyl-carrier-protein.</text>
</comment>
<comment type="catalytic activity">
    <reaction evidence="1">
        <text>apo-[ACP] + CoA = holo-[ACP] + adenosine 3',5'-bisphosphate + H(+)</text>
        <dbReference type="Rhea" id="RHEA:12068"/>
        <dbReference type="Rhea" id="RHEA-COMP:9685"/>
        <dbReference type="Rhea" id="RHEA-COMP:9690"/>
        <dbReference type="ChEBI" id="CHEBI:15378"/>
        <dbReference type="ChEBI" id="CHEBI:29999"/>
        <dbReference type="ChEBI" id="CHEBI:57287"/>
        <dbReference type="ChEBI" id="CHEBI:58343"/>
        <dbReference type="ChEBI" id="CHEBI:64479"/>
        <dbReference type="EC" id="2.7.8.7"/>
    </reaction>
</comment>
<comment type="cofactor">
    <cofactor evidence="1">
        <name>Mg(2+)</name>
        <dbReference type="ChEBI" id="CHEBI:18420"/>
    </cofactor>
</comment>
<comment type="subcellular location">
    <subcellularLocation>
        <location evidence="1">Cytoplasm</location>
    </subcellularLocation>
</comment>
<comment type="similarity">
    <text evidence="1">Belongs to the P-Pant transferase superfamily. AcpS family.</text>
</comment>
<reference key="1">
    <citation type="journal article" date="2002" name="Nat. Genet.">
        <title>Genome sequence of the endocellular obligate symbiont of tsetse flies, Wigglesworthia glossinidia.</title>
        <authorList>
            <person name="Akman L."/>
            <person name="Yamashita A."/>
            <person name="Watanabe H."/>
            <person name="Oshima K."/>
            <person name="Shiba T."/>
            <person name="Hattori M."/>
            <person name="Aksoy S."/>
        </authorList>
    </citation>
    <scope>NUCLEOTIDE SEQUENCE [LARGE SCALE GENOMIC DNA]</scope>
</reference>
<proteinExistence type="inferred from homology"/>
<organism>
    <name type="scientific">Wigglesworthia glossinidia brevipalpis</name>
    <dbReference type="NCBI Taxonomy" id="36870"/>
    <lineage>
        <taxon>Bacteria</taxon>
        <taxon>Pseudomonadati</taxon>
        <taxon>Pseudomonadota</taxon>
        <taxon>Gammaproteobacteria</taxon>
        <taxon>Enterobacterales</taxon>
        <taxon>Erwiniaceae</taxon>
        <taxon>Wigglesworthia</taxon>
    </lineage>
</organism>
<keyword id="KW-0963">Cytoplasm</keyword>
<keyword id="KW-0275">Fatty acid biosynthesis</keyword>
<keyword id="KW-0276">Fatty acid metabolism</keyword>
<keyword id="KW-0444">Lipid biosynthesis</keyword>
<keyword id="KW-0443">Lipid metabolism</keyword>
<keyword id="KW-0460">Magnesium</keyword>
<keyword id="KW-0479">Metal-binding</keyword>
<keyword id="KW-1185">Reference proteome</keyword>
<keyword id="KW-0808">Transferase</keyword>
<gene>
    <name evidence="1" type="primary">acpS</name>
    <name type="ordered locus">WIGBR1980</name>
</gene>
<sequence length="139" mass="15871">MAIIGIGIDIVNLERINKIILCYGNKFVKKILSFNEKKKYYELKNKKKNISVNFLAKRLAAKEAASKAFGLGMKKGLYFSQFEVLNNNLGKPYFKFNNTAKNLIKALNITNIHLSLTDERKYACATVIFEDNRTNIILS</sequence>
<evidence type="ECO:0000255" key="1">
    <source>
        <dbReference type="HAMAP-Rule" id="MF_00101"/>
    </source>
</evidence>
<accession>Q8D303</accession>
<protein>
    <recommendedName>
        <fullName evidence="1">Holo-[acyl-carrier-protein] synthase</fullName>
        <shortName evidence="1">Holo-ACP synthase</shortName>
        <ecNumber evidence="1">2.7.8.7</ecNumber>
    </recommendedName>
    <alternativeName>
        <fullName evidence="1">4'-phosphopantetheinyl transferase AcpS</fullName>
    </alternativeName>
</protein>
<name>ACPS_WIGBR</name>